<name>VSP1_PROFL</name>
<proteinExistence type="evidence at protein level"/>
<sequence>MVLIRVLANLLILQLSYAQKSSELVIGGDECNINEHPFLVALYDAWSGRFLCGGTLINPEWVLTAAHCDSKNFKMKLGAHSKKVLNEDEQIRNPKEKFICPNKKNDEVLDKDIMLIKLDSPVSYSEHIAPLSLPSSPPSVGSVCRIMGWGSITPVEETFPDVPHCANINLLDDVECKPGYPELLPEYRTLCAGVLQGGIDTCGFDSGTPLICNGQFQGIVSYGGHPCGQSRKPGIYTKVFDYNAWIQSIIAGNTAATCLP</sequence>
<evidence type="ECO:0000250" key="1"/>
<evidence type="ECO:0000255" key="2">
    <source>
        <dbReference type="PROSITE-ProRule" id="PRU00274"/>
    </source>
</evidence>
<evidence type="ECO:0000269" key="3">
    <source>
    </source>
</evidence>
<evidence type="ECO:0000269" key="4">
    <source>
    </source>
</evidence>
<evidence type="ECO:0000269" key="5">
    <source>
    </source>
</evidence>
<evidence type="ECO:0000269" key="6">
    <source>
    </source>
</evidence>
<evidence type="ECO:0000269" key="7">
    <source>
    </source>
</evidence>
<evidence type="ECO:0000269" key="8">
    <source>
    </source>
</evidence>
<evidence type="ECO:0000269" key="9">
    <source>
    </source>
</evidence>
<evidence type="ECO:0000269" key="10">
    <source>
    </source>
</evidence>
<evidence type="ECO:0000305" key="11"/>
<evidence type="ECO:0000305" key="12">
    <source>
    </source>
</evidence>
<accession>P05620</accession>
<accession>O13056</accession>
<keyword id="KW-1204">Blood coagulation cascade activating toxin</keyword>
<keyword id="KW-1216">Complement system impairing toxin</keyword>
<keyword id="KW-0903">Direct protein sequencing</keyword>
<keyword id="KW-1015">Disulfide bond</keyword>
<keyword id="KW-1199">Hemostasis impairing toxin</keyword>
<keyword id="KW-0378">Hydrolase</keyword>
<keyword id="KW-1201">Platelet aggregation inhibiting toxin</keyword>
<keyword id="KW-0645">Protease</keyword>
<keyword id="KW-0964">Secreted</keyword>
<keyword id="KW-0720">Serine protease</keyword>
<keyword id="KW-0732">Signal</keyword>
<keyword id="KW-0800">Toxin</keyword>
<keyword id="KW-0865">Zymogen</keyword>
<dbReference type="EC" id="3.4.21.74"/>
<dbReference type="EMBL" id="D67078">
    <property type="protein sequence ID" value="BAA19976.1"/>
    <property type="molecule type" value="mRNA"/>
</dbReference>
<dbReference type="PIR" id="A41456">
    <property type="entry name" value="A41456"/>
</dbReference>
<dbReference type="SMR" id="P05620"/>
<dbReference type="MEROPS" id="S01.347"/>
<dbReference type="GO" id="GO:0005576">
    <property type="term" value="C:extracellular region"/>
    <property type="evidence" value="ECO:0007669"/>
    <property type="project" value="UniProtKB-SubCell"/>
</dbReference>
<dbReference type="GO" id="GO:0030141">
    <property type="term" value="C:secretory granule"/>
    <property type="evidence" value="ECO:0007669"/>
    <property type="project" value="TreeGrafter"/>
</dbReference>
<dbReference type="GO" id="GO:0004252">
    <property type="term" value="F:serine-type endopeptidase activity"/>
    <property type="evidence" value="ECO:0007669"/>
    <property type="project" value="InterPro"/>
</dbReference>
<dbReference type="GO" id="GO:0090729">
    <property type="term" value="F:toxin activity"/>
    <property type="evidence" value="ECO:0007669"/>
    <property type="project" value="UniProtKB-KW"/>
</dbReference>
<dbReference type="GO" id="GO:0006508">
    <property type="term" value="P:proteolysis"/>
    <property type="evidence" value="ECO:0007669"/>
    <property type="project" value="UniProtKB-KW"/>
</dbReference>
<dbReference type="CDD" id="cd00190">
    <property type="entry name" value="Tryp_SPc"/>
    <property type="match status" value="1"/>
</dbReference>
<dbReference type="FunFam" id="2.40.10.10:FF:000158">
    <property type="entry name" value="Thrombin-like enzyme saxthrombin"/>
    <property type="match status" value="1"/>
</dbReference>
<dbReference type="FunFam" id="2.40.10.10:FF:000153">
    <property type="entry name" value="Venom plasminogen activator TSV-PA"/>
    <property type="match status" value="1"/>
</dbReference>
<dbReference type="Gene3D" id="2.40.10.10">
    <property type="entry name" value="Trypsin-like serine proteases"/>
    <property type="match status" value="2"/>
</dbReference>
<dbReference type="InterPro" id="IPR009003">
    <property type="entry name" value="Peptidase_S1_PA"/>
</dbReference>
<dbReference type="InterPro" id="IPR043504">
    <property type="entry name" value="Peptidase_S1_PA_chymotrypsin"/>
</dbReference>
<dbReference type="InterPro" id="IPR001314">
    <property type="entry name" value="Peptidase_S1A"/>
</dbReference>
<dbReference type="InterPro" id="IPR001254">
    <property type="entry name" value="Trypsin_dom"/>
</dbReference>
<dbReference type="InterPro" id="IPR018114">
    <property type="entry name" value="TRYPSIN_HIS"/>
</dbReference>
<dbReference type="PANTHER" id="PTHR24271:SF47">
    <property type="entry name" value="KALLIKREIN-1"/>
    <property type="match status" value="1"/>
</dbReference>
<dbReference type="PANTHER" id="PTHR24271">
    <property type="entry name" value="KALLIKREIN-RELATED"/>
    <property type="match status" value="1"/>
</dbReference>
<dbReference type="Pfam" id="PF00089">
    <property type="entry name" value="Trypsin"/>
    <property type="match status" value="1"/>
</dbReference>
<dbReference type="PRINTS" id="PR00722">
    <property type="entry name" value="CHYMOTRYPSIN"/>
</dbReference>
<dbReference type="SMART" id="SM00020">
    <property type="entry name" value="Tryp_SPc"/>
    <property type="match status" value="1"/>
</dbReference>
<dbReference type="SUPFAM" id="SSF50494">
    <property type="entry name" value="Trypsin-like serine proteases"/>
    <property type="match status" value="1"/>
</dbReference>
<dbReference type="PROSITE" id="PS50240">
    <property type="entry name" value="TRYPSIN_DOM"/>
    <property type="match status" value="1"/>
</dbReference>
<dbReference type="PROSITE" id="PS00134">
    <property type="entry name" value="TRYPSIN_HIS"/>
    <property type="match status" value="1"/>
</dbReference>
<comment type="function">
    <text evidence="3 4 6 7 8 10">Thrombin-like snake venom serine protease that clots fibrinogen (FGA) by releasing fibrinopeptide A. According to PubMed:8585090, only cleaves rabbit fibrinogen, whereas no specificity is described in PubMed:3910643 (tests done on bovine fibrinogen). Also acts as a C3 convertase that independently cleaves human C3 and kick-starts the complement cascade. Also increases urokinase-type plasminogen activator (PLAU) and plasminogen activator inhibitor (SERPINE1) in cultured bovine pulmonary artery endothelial cells. Dose-dependently inhibits collagen-induced platelet aggregation.</text>
</comment>
<comment type="catalytic activity">
    <reaction>
        <text>Selective cleavage of Arg-|-Xaa bond in fibrinogen, to form fibrin, and release fibrinopeptide A. The specificity of further degradation of fibrinogen varies with species origin of the enzyme.</text>
        <dbReference type="EC" id="3.4.21.74"/>
    </reaction>
</comment>
<comment type="activity regulation">
    <text evidence="6 9">Inhibited by alpha(2)-macroglobulin, diisopropylfluorophosphate (DFP) and PMSF. Low inhibition by tosyl-L-lysine chloromethyl ketone.</text>
</comment>
<comment type="subunit">
    <text evidence="1">Monomer.</text>
</comment>
<comment type="subcellular location">
    <subcellularLocation>
        <location>Secreted</location>
    </subcellularLocation>
</comment>
<comment type="tissue specificity">
    <text>Expressed by the venom gland.</text>
</comment>
<comment type="miscellaneous">
    <text evidence="12">Negative results: does not affect fibrinogen of human, monkey, bovine, dog, rat and guinea-pig. Does not release fibrinopeptide B (PubMed:9241744).</text>
</comment>
<comment type="similarity">
    <text evidence="2">Belongs to the peptidase S1 family. Snake venom subfamily.</text>
</comment>
<reference key="1">
    <citation type="journal article" date="1996" name="FEBS Lett.">
        <title>Accelerated evolution of crotalinae snake venom gland serine proteases.</title>
        <authorList>
            <person name="Deshimaru M."/>
            <person name="Ogawa T."/>
            <person name="Nakashima K."/>
            <person name="Nobuhisa I."/>
            <person name="Chijiwa T."/>
            <person name="Shimohigashi Y."/>
            <person name="Fukumaki Y."/>
            <person name="Niwa M."/>
            <person name="Yamashina I."/>
            <person name="Hattori S."/>
            <person name="Ohno M."/>
        </authorList>
    </citation>
    <scope>NUCLEOTIDE SEQUENCE [MRNA]</scope>
    <source>
        <tissue>Venom gland</tissue>
    </source>
</reference>
<reference key="2">
    <citation type="journal article" date="2007" name="Biochem. Biophys. Res. Commun.">
        <title>Cloning of habutobin cDNA and antithrombotic activity of recombinant protein.</title>
        <authorList>
            <person name="Sunagawa M."/>
            <person name="Nakamura M."/>
            <person name="Kosugi T."/>
        </authorList>
    </citation>
    <scope>NUCLEOTIDE SEQUENCE [MRNA]</scope>
    <scope>PROTEIN SEQUENCE OF 26-41</scope>
    <source>
        <tissue>Venom</tissue>
        <tissue>Venom gland</tissue>
    </source>
</reference>
<reference key="3">
    <citation type="journal article" date="1988" name="J. Biochem.">
        <title>Amino acid sequence of a coagulant enzyme, flavoxobin, from Trimeresurus flavoviridis venom.</title>
        <authorList>
            <person name="Shieh T.-C."/>
            <person name="Kawabata S."/>
            <person name="Kihara H."/>
            <person name="Ohno M."/>
            <person name="Iwanaga S."/>
        </authorList>
    </citation>
    <scope>PROTEIN SEQUENCE OF 25-260</scope>
    <source>
        <tissue>Venom</tissue>
    </source>
</reference>
<reference key="4">
    <citation type="journal article" date="2002" name="Immunology">
        <title>Flavoxobin, a serine protease from Trimeresurus flavoviridis (habu snake) venom, independently cleaves Arg726-Ser727 of human C3 and acts as a novel, heterologous C3 convertase.</title>
        <authorList>
            <person name="Yamamoto C."/>
            <person name="Tsuru D."/>
            <person name="Oda-Ueda N."/>
            <person name="Ohno M."/>
            <person name="Hattori S."/>
            <person name="Kim S.T."/>
        </authorList>
    </citation>
    <scope>PROTEIN SEQUENCE OF 25-49</scope>
    <scope>FUNCTION AS C3 CONVERTASE-LIKE</scope>
    <source>
        <tissue>Venom</tissue>
    </source>
</reference>
<reference key="5">
    <citation type="journal article" date="1988" name="J. Biochem.">
        <authorList>
            <person name="Shieh T.-C."/>
            <person name="Kawabata S."/>
            <person name="Kihara H."/>
            <person name="Ohno M."/>
            <person name="Iwanaga S."/>
        </authorList>
    </citation>
    <scope>ERRATUM OF PUBMED:12225369</scope>
</reference>
<reference key="6">
    <citation type="journal article" date="1985" name="J. Biochem.">
        <title>Purification and characterization of a coagulant enzyme from Trimeresurus flavoviridis venom.</title>
        <authorList>
            <person name="Shieh T.C."/>
            <person name="Tanaka S."/>
            <person name="Kihara H."/>
            <person name="Ohno M."/>
            <person name="Makisumi S."/>
        </authorList>
    </citation>
    <scope>FUNCTION</scope>
    <scope>ACTIVITY REGULATION</scope>
</reference>
<reference key="7">
    <citation type="journal article" date="1995" name="Toxicon">
        <title>Pharmacokinetics of habutobin in rabbits.</title>
        <authorList>
            <person name="Nakamura M."/>
            <person name="Kinjoh K."/>
            <person name="Miyagi C."/>
            <person name="Oka U."/>
            <person name="Sunagawa M."/>
            <person name="Yamashita S."/>
            <person name="Kosugi T."/>
        </authorList>
    </citation>
    <scope>FUNCTION</scope>
</reference>
<reference key="8">
    <citation type="journal article" date="1996" name="Toxicon">
        <title>Habutobin releases plasminogen activator (U-PA) from bovine pulmonary artery endothelial cells.</title>
        <authorList>
            <person name="Sunagawa M."/>
            <person name="Hanashiro K."/>
            <person name="Nakamura M."/>
            <person name="Kosugi T."/>
        </authorList>
    </citation>
    <scope>FUNCTION</scope>
</reference>
<reference key="9">
    <citation type="journal article" date="1996" name="Toxicon">
        <title>Alpha 2-macroglobulin of rabbits inhibits the habutobin activity.</title>
        <authorList>
            <person name="Oka U."/>
            <person name="Nakamura M."/>
            <person name="Kinjoh K."/>
            <person name="Kosugi T."/>
        </authorList>
    </citation>
    <scope>ACTIVITY REGULATION</scope>
</reference>
<reference key="10">
    <citation type="journal article" date="1997" name="Thromb. Haemost.">
        <title>Habutobin splits the Arg16-Gly17 bond in the A alpha chain of rabbit fibrinogen.</title>
        <authorList>
            <person name="Kinjoh K."/>
            <person name="Kosugi T."/>
            <person name="Nakamura M."/>
            <person name="Hanashiro K."/>
            <person name="Sunagawa M."/>
            <person name="Tokeshi Y."/>
            <person name="Eguchi Y."/>
        </authorList>
    </citation>
    <scope>FUNCTION</scope>
</reference>
<reference key="11">
    <citation type="journal article" date="2000" name="Toxicon">
        <title>Habutobin recognizes Thr(7) in the sequence of fibrinopeptide A of rabbit fibrinogen.</title>
        <authorList>
            <person name="Nejime T."/>
            <person name="Kinjoh K."/>
            <person name="Nakamura M."/>
            <person name="Hanashiro K."/>
            <person name="Sunagawa M."/>
            <person name="Eguchi Y."/>
            <person name="Kosugi T."/>
        </authorList>
    </citation>
    <scope>FUNCTION</scope>
</reference>
<protein>
    <recommendedName>
        <fullName>Thrombin-like enzyme flavoxobin</fullName>
        <shortName>SVTLE</shortName>
        <ecNumber>3.4.21.74</ecNumber>
    </recommendedName>
    <alternativeName>
        <fullName>Fibrinogen-clotting enzyme</fullName>
    </alternativeName>
    <alternativeName>
        <fullName>Habutobin</fullName>
    </alternativeName>
    <alternativeName>
        <fullName>Snake venom serine protease 1</fullName>
        <shortName>SVSP</shortName>
    </alternativeName>
</protein>
<gene>
    <name type="primary">TLF1</name>
</gene>
<feature type="signal peptide" evidence="1">
    <location>
        <begin position="1"/>
        <end position="18"/>
    </location>
</feature>
<feature type="propeptide" id="PRO_0000028385" evidence="4 5">
    <location>
        <begin position="19"/>
        <end position="24"/>
    </location>
</feature>
<feature type="chain" id="PRO_0000028386" description="Thrombin-like enzyme flavoxobin">
    <location>
        <begin position="25"/>
        <end position="260"/>
    </location>
</feature>
<feature type="domain" description="Peptidase S1" evidence="2">
    <location>
        <begin position="25"/>
        <end position="251"/>
    </location>
</feature>
<feature type="active site" description="Charge relay system" evidence="1">
    <location>
        <position position="67"/>
    </location>
</feature>
<feature type="active site" description="Charge relay system" evidence="1">
    <location>
        <position position="112"/>
    </location>
</feature>
<feature type="active site" description="Charge relay system" evidence="1">
    <location>
        <position position="206"/>
    </location>
</feature>
<feature type="disulfide bond" evidence="2">
    <location>
        <begin position="31"/>
        <end position="165"/>
    </location>
</feature>
<feature type="disulfide bond" evidence="2">
    <location>
        <begin position="52"/>
        <end position="68"/>
    </location>
</feature>
<feature type="disulfide bond" evidence="2">
    <location>
        <begin position="100"/>
        <end position="258"/>
    </location>
</feature>
<feature type="disulfide bond" evidence="2">
    <location>
        <begin position="144"/>
        <end position="212"/>
    </location>
</feature>
<feature type="disulfide bond" evidence="2">
    <location>
        <begin position="176"/>
        <end position="191"/>
    </location>
</feature>
<feature type="disulfide bond" evidence="2">
    <location>
        <begin position="202"/>
        <end position="227"/>
    </location>
</feature>
<feature type="sequence conflict" description="In Ref. 2; AA sequence." evidence="11" ref="2">
    <location>
        <position position="31"/>
    </location>
</feature>
<feature type="sequence conflict" description="In Ref. 2; AA sequence." evidence="11" ref="2">
    <original>EHP</original>
    <variation>HR</variation>
    <location>
        <begin position="35"/>
        <end position="37"/>
    </location>
</feature>
<feature type="sequence conflict" description="In Ref. 2; AA sequence." evidence="11" ref="2">
    <original>A</original>
    <variation>V</variation>
    <location>
        <position position="41"/>
    </location>
</feature>
<feature type="sequence conflict" description="In Ref. 3; AA sequence." evidence="11" ref="3">
    <original>K</original>
    <variation>Q</variation>
    <location>
        <position position="82"/>
    </location>
</feature>
<feature type="sequence conflict" description="In Ref. 3; AA sequence." evidence="11" ref="3">
    <original>D</original>
    <variation>T</variation>
    <location>
        <position position="106"/>
    </location>
</feature>
<feature type="sequence conflict" description="In Ref. 3; AA sequence." evidence="11" ref="3">
    <original>SY</original>
    <variation>YI</variation>
    <location>
        <begin position="221"/>
        <end position="222"/>
    </location>
</feature>
<feature type="sequence conflict" description="In Ref. 3; AA sequence." evidence="11" ref="3">
    <original>G</original>
    <variation>S</variation>
    <location>
        <position position="224"/>
    </location>
</feature>
<feature type="sequence conflict" description="In Ref. 2; no nucleotide entry." evidence="11" ref="2">
    <original>L</original>
    <variation>P</variation>
    <location>
        <position position="259"/>
    </location>
</feature>
<organism>
    <name type="scientific">Protobothrops flavoviridis</name>
    <name type="common">Habu</name>
    <name type="synonym">Trimeresurus flavoviridis</name>
    <dbReference type="NCBI Taxonomy" id="88087"/>
    <lineage>
        <taxon>Eukaryota</taxon>
        <taxon>Metazoa</taxon>
        <taxon>Chordata</taxon>
        <taxon>Craniata</taxon>
        <taxon>Vertebrata</taxon>
        <taxon>Euteleostomi</taxon>
        <taxon>Lepidosauria</taxon>
        <taxon>Squamata</taxon>
        <taxon>Bifurcata</taxon>
        <taxon>Unidentata</taxon>
        <taxon>Episquamata</taxon>
        <taxon>Toxicofera</taxon>
        <taxon>Serpentes</taxon>
        <taxon>Colubroidea</taxon>
        <taxon>Viperidae</taxon>
        <taxon>Crotalinae</taxon>
        <taxon>Protobothrops</taxon>
    </lineage>
</organism>